<accession>O82307</accession>
<accession>P93029</accession>
<accession>Q8LA97</accession>
<comment type="sequence caution" evidence="3">
    <conflict type="erroneous initiation">
        <sequence resource="EMBL-CDS" id="AAB68046"/>
    </conflict>
    <text>Truncated N-terminus.</text>
</comment>
<comment type="sequence caution" evidence="3">
    <conflict type="frameshift">
        <sequence resource="EMBL-CDS" id="AAB68046"/>
    </conflict>
</comment>
<dbReference type="EMBL" id="AC005395">
    <property type="protein sequence ID" value="AAC42256.1"/>
    <property type="molecule type" value="Genomic_DNA"/>
</dbReference>
<dbReference type="EMBL" id="CP002685">
    <property type="protein sequence ID" value="AEC07769.1"/>
    <property type="molecule type" value="Genomic_DNA"/>
</dbReference>
<dbReference type="EMBL" id="CP002685">
    <property type="protein sequence ID" value="AEC07770.1"/>
    <property type="molecule type" value="Genomic_DNA"/>
</dbReference>
<dbReference type="EMBL" id="AF370590">
    <property type="protein sequence ID" value="AAK43909.1"/>
    <property type="molecule type" value="mRNA"/>
</dbReference>
<dbReference type="EMBL" id="AF375403">
    <property type="protein sequence ID" value="AAK52987.1"/>
    <property type="molecule type" value="mRNA"/>
</dbReference>
<dbReference type="EMBL" id="AY129468">
    <property type="protein sequence ID" value="AAM91054.1"/>
    <property type="molecule type" value="mRNA"/>
</dbReference>
<dbReference type="EMBL" id="AK117272">
    <property type="protein sequence ID" value="BAC41945.1"/>
    <property type="molecule type" value="mRNA"/>
</dbReference>
<dbReference type="EMBL" id="AY087957">
    <property type="protein sequence ID" value="AAM65505.1"/>
    <property type="molecule type" value="mRNA"/>
</dbReference>
<dbReference type="EMBL" id="U81238">
    <property type="protein sequence ID" value="AAB68046.1"/>
    <property type="status" value="ALT_SEQ"/>
    <property type="molecule type" value="mRNA"/>
</dbReference>
<dbReference type="PIR" id="B84654">
    <property type="entry name" value="B84654"/>
</dbReference>
<dbReference type="BioGRID" id="2483">
    <property type="interactions" value="13"/>
</dbReference>
<dbReference type="FunCoup" id="O82307">
    <property type="interactions" value="3"/>
</dbReference>
<dbReference type="IntAct" id="O82307">
    <property type="interactions" value="13"/>
</dbReference>
<dbReference type="STRING" id="3702.O82307"/>
<dbReference type="PaxDb" id="3702-AT2G25900.1"/>
<dbReference type="ProteomicsDB" id="240515"/>
<dbReference type="EnsemblPlants" id="AT2G25900.1">
    <property type="protein sequence ID" value="AT2G25900.1"/>
    <property type="gene ID" value="AT2G25900"/>
</dbReference>
<dbReference type="EnsemblPlants" id="AT2G25900.2">
    <property type="protein sequence ID" value="AT2G25900.2"/>
    <property type="gene ID" value="AT2G25900"/>
</dbReference>
<dbReference type="GeneID" id="817131"/>
<dbReference type="Gramene" id="AT2G25900.1">
    <property type="protein sequence ID" value="AT2G25900.1"/>
    <property type="gene ID" value="AT2G25900"/>
</dbReference>
<dbReference type="Gramene" id="AT2G25900.2">
    <property type="protein sequence ID" value="AT2G25900.2"/>
    <property type="gene ID" value="AT2G25900"/>
</dbReference>
<dbReference type="KEGG" id="ath:AT2G25900"/>
<dbReference type="Araport" id="AT2G25900"/>
<dbReference type="TAIR" id="AT2G25900">
    <property type="gene designation" value="ATCTH"/>
</dbReference>
<dbReference type="eggNOG" id="KOG1595">
    <property type="taxonomic scope" value="Eukaryota"/>
</dbReference>
<dbReference type="HOGENOM" id="CLU_044407_0_0_1"/>
<dbReference type="InParanoid" id="O82307"/>
<dbReference type="OMA" id="PHPTIHI"/>
<dbReference type="PhylomeDB" id="O82307"/>
<dbReference type="CD-CODE" id="24475C75">
    <property type="entry name" value="Stress granule"/>
</dbReference>
<dbReference type="CD-CODE" id="60F64496">
    <property type="entry name" value="P-body"/>
</dbReference>
<dbReference type="PRO" id="PR:O82307"/>
<dbReference type="Proteomes" id="UP000006548">
    <property type="component" value="Chromosome 2"/>
</dbReference>
<dbReference type="ExpressionAtlas" id="O82307">
    <property type="expression patterns" value="baseline and differential"/>
</dbReference>
<dbReference type="GO" id="GO:0005737">
    <property type="term" value="C:cytoplasm"/>
    <property type="evidence" value="ECO:0000314"/>
    <property type="project" value="TAIR"/>
</dbReference>
<dbReference type="GO" id="GO:0003677">
    <property type="term" value="F:DNA binding"/>
    <property type="evidence" value="ECO:0000314"/>
    <property type="project" value="TAIR"/>
</dbReference>
<dbReference type="GO" id="GO:0003700">
    <property type="term" value="F:DNA-binding transcription factor activity"/>
    <property type="evidence" value="ECO:0000250"/>
    <property type="project" value="TAIR"/>
</dbReference>
<dbReference type="GO" id="GO:0003723">
    <property type="term" value="F:RNA binding"/>
    <property type="evidence" value="ECO:0000314"/>
    <property type="project" value="TAIR"/>
</dbReference>
<dbReference type="GO" id="GO:0003727">
    <property type="term" value="F:single-stranded RNA binding"/>
    <property type="evidence" value="ECO:0000314"/>
    <property type="project" value="TAIR"/>
</dbReference>
<dbReference type="GO" id="GO:0008270">
    <property type="term" value="F:zinc ion binding"/>
    <property type="evidence" value="ECO:0007669"/>
    <property type="project" value="UniProtKB-KW"/>
</dbReference>
<dbReference type="GO" id="GO:0061157">
    <property type="term" value="P:mRNA destabilization"/>
    <property type="evidence" value="ECO:0000314"/>
    <property type="project" value="TAIR"/>
</dbReference>
<dbReference type="GO" id="GO:0006355">
    <property type="term" value="P:regulation of DNA-templated transcription"/>
    <property type="evidence" value="ECO:0000304"/>
    <property type="project" value="TAIR"/>
</dbReference>
<dbReference type="FunFam" id="3.30.1370.210:FF:000009">
    <property type="entry name" value="Zinc finger CCCH domain-containing protein 66"/>
    <property type="match status" value="1"/>
</dbReference>
<dbReference type="Gene3D" id="3.30.1370.210">
    <property type="match status" value="1"/>
</dbReference>
<dbReference type="InterPro" id="IPR045234">
    <property type="entry name" value="Unkempt-like"/>
</dbReference>
<dbReference type="InterPro" id="IPR041367">
    <property type="entry name" value="Znf-CCCH_4"/>
</dbReference>
<dbReference type="InterPro" id="IPR000571">
    <property type="entry name" value="Znf_CCCH"/>
</dbReference>
<dbReference type="PANTHER" id="PTHR14493">
    <property type="entry name" value="UNKEMPT FAMILY MEMBER"/>
    <property type="match status" value="1"/>
</dbReference>
<dbReference type="PANTHER" id="PTHR14493:SF147">
    <property type="entry name" value="ZINC FINGER CCCH DOMAIN-CONTAINING PROTEIN 23"/>
    <property type="match status" value="1"/>
</dbReference>
<dbReference type="Pfam" id="PF18044">
    <property type="entry name" value="zf-CCCH_4"/>
    <property type="match status" value="1"/>
</dbReference>
<dbReference type="Pfam" id="PF25512">
    <property type="entry name" value="zf-CCCH_AtC3H23"/>
    <property type="match status" value="1"/>
</dbReference>
<dbReference type="SMART" id="SM00356">
    <property type="entry name" value="ZnF_C3H1"/>
    <property type="match status" value="2"/>
</dbReference>
<dbReference type="PROSITE" id="PS50103">
    <property type="entry name" value="ZF_C3H1"/>
    <property type="match status" value="2"/>
</dbReference>
<evidence type="ECO:0000255" key="1">
    <source>
        <dbReference type="PROSITE-ProRule" id="PRU00723"/>
    </source>
</evidence>
<evidence type="ECO:0000256" key="2">
    <source>
        <dbReference type="SAM" id="MobiDB-lite"/>
    </source>
</evidence>
<evidence type="ECO:0000305" key="3"/>
<feature type="chain" id="PRO_0000371982" description="Zinc finger CCCH domain-containing protein 23">
    <location>
        <begin position="1"/>
        <end position="315"/>
    </location>
</feature>
<feature type="zinc finger region" description="C3H1-type 1" evidence="1">
    <location>
        <begin position="131"/>
        <end position="157"/>
    </location>
</feature>
<feature type="zinc finger region" description="C3H1-type 2" evidence="1">
    <location>
        <begin position="165"/>
        <end position="189"/>
    </location>
</feature>
<feature type="region of interest" description="Disordered" evidence="2">
    <location>
        <begin position="1"/>
        <end position="21"/>
    </location>
</feature>
<feature type="sequence conflict" description="In Ref. 5; AAM65505." evidence="3" ref="5">
    <original>D</original>
    <variation>H</variation>
    <location>
        <position position="148"/>
    </location>
</feature>
<feature type="sequence conflict" description="In Ref. 5; AAM65505." evidence="3" ref="5">
    <original>R</original>
    <variation>G</variation>
    <location>
        <position position="258"/>
    </location>
</feature>
<keyword id="KW-0238">DNA-binding</keyword>
<keyword id="KW-0479">Metal-binding</keyword>
<keyword id="KW-1185">Reference proteome</keyword>
<keyword id="KW-0677">Repeat</keyword>
<keyword id="KW-0862">Zinc</keyword>
<keyword id="KW-0863">Zinc-finger</keyword>
<proteinExistence type="evidence at transcript level"/>
<gene>
    <name type="ordered locus">At2g25900</name>
    <name type="ORF">F17H15.7</name>
</gene>
<organism>
    <name type="scientific">Arabidopsis thaliana</name>
    <name type="common">Mouse-ear cress</name>
    <dbReference type="NCBI Taxonomy" id="3702"/>
    <lineage>
        <taxon>Eukaryota</taxon>
        <taxon>Viridiplantae</taxon>
        <taxon>Streptophyta</taxon>
        <taxon>Embryophyta</taxon>
        <taxon>Tracheophyta</taxon>
        <taxon>Spermatophyta</taxon>
        <taxon>Magnoliopsida</taxon>
        <taxon>eudicotyledons</taxon>
        <taxon>Gunneridae</taxon>
        <taxon>Pentapetalae</taxon>
        <taxon>rosids</taxon>
        <taxon>malvids</taxon>
        <taxon>Brassicales</taxon>
        <taxon>Brassicaceae</taxon>
        <taxon>Camelineae</taxon>
        <taxon>Arabidopsis</taxon>
    </lineage>
</organism>
<sequence>MMIGENKNRPHPTIHIPQWDQINDPTATISSPFSSVNLNSVNDYPHSPSPYLDSFASLFRYLPSNELTNDSDSSSGDESSPLTDSFSSDEFRIYEFKIRRCARGRSHDWTECPFAHPGEKARRRDPRKFHYSGTACPEFRKGSCRRGDSCEFSHGVFECWLHPSRYRTQPCKDGTSCRRRICFFAHTTEQLRVLPCSLDPDLGFFSGLATSPTSILVSPSFSPPSESPPLSPSTGELIASMRKMQLNGGGCSWSSPMRSAVRLPFSSSLRPIQAATWPRIREFEIEEAPAMEFVESGKELRAEMYARLSRENSLG</sequence>
<reference key="1">
    <citation type="journal article" date="1999" name="Nature">
        <title>Sequence and analysis of chromosome 2 of the plant Arabidopsis thaliana.</title>
        <authorList>
            <person name="Lin X."/>
            <person name="Kaul S."/>
            <person name="Rounsley S.D."/>
            <person name="Shea T.P."/>
            <person name="Benito M.-I."/>
            <person name="Town C.D."/>
            <person name="Fujii C.Y."/>
            <person name="Mason T.M."/>
            <person name="Bowman C.L."/>
            <person name="Barnstead M.E."/>
            <person name="Feldblyum T.V."/>
            <person name="Buell C.R."/>
            <person name="Ketchum K.A."/>
            <person name="Lee J.J."/>
            <person name="Ronning C.M."/>
            <person name="Koo H.L."/>
            <person name="Moffat K.S."/>
            <person name="Cronin L.A."/>
            <person name="Shen M."/>
            <person name="Pai G."/>
            <person name="Van Aken S."/>
            <person name="Umayam L."/>
            <person name="Tallon L.J."/>
            <person name="Gill J.E."/>
            <person name="Adams M.D."/>
            <person name="Carrera A.J."/>
            <person name="Creasy T.H."/>
            <person name="Goodman H.M."/>
            <person name="Somerville C.R."/>
            <person name="Copenhaver G.P."/>
            <person name="Preuss D."/>
            <person name="Nierman W.C."/>
            <person name="White O."/>
            <person name="Eisen J.A."/>
            <person name="Salzberg S.L."/>
            <person name="Fraser C.M."/>
            <person name="Venter J.C."/>
        </authorList>
    </citation>
    <scope>NUCLEOTIDE SEQUENCE [LARGE SCALE GENOMIC DNA]</scope>
    <source>
        <strain>cv. Columbia</strain>
    </source>
</reference>
<reference key="2">
    <citation type="journal article" date="2017" name="Plant J.">
        <title>Araport11: a complete reannotation of the Arabidopsis thaliana reference genome.</title>
        <authorList>
            <person name="Cheng C.Y."/>
            <person name="Krishnakumar V."/>
            <person name="Chan A.P."/>
            <person name="Thibaud-Nissen F."/>
            <person name="Schobel S."/>
            <person name="Town C.D."/>
        </authorList>
    </citation>
    <scope>GENOME REANNOTATION</scope>
    <source>
        <strain>cv. Columbia</strain>
    </source>
</reference>
<reference key="3">
    <citation type="journal article" date="2002" name="Science">
        <title>Functional annotation of a full-length Arabidopsis cDNA collection.</title>
        <authorList>
            <person name="Seki M."/>
            <person name="Narusaka M."/>
            <person name="Kamiya A."/>
            <person name="Ishida J."/>
            <person name="Satou M."/>
            <person name="Sakurai T."/>
            <person name="Nakajima M."/>
            <person name="Enju A."/>
            <person name="Akiyama K."/>
            <person name="Oono Y."/>
            <person name="Muramatsu M."/>
            <person name="Hayashizaki Y."/>
            <person name="Kawai J."/>
            <person name="Carninci P."/>
            <person name="Itoh M."/>
            <person name="Ishii Y."/>
            <person name="Arakawa T."/>
            <person name="Shibata K."/>
            <person name="Shinagawa A."/>
            <person name="Shinozaki K."/>
        </authorList>
    </citation>
    <scope>NUCLEOTIDE SEQUENCE [LARGE SCALE MRNA]</scope>
    <source>
        <strain>cv. Columbia</strain>
    </source>
</reference>
<reference key="4">
    <citation type="journal article" date="2003" name="Science">
        <title>Empirical analysis of transcriptional activity in the Arabidopsis genome.</title>
        <authorList>
            <person name="Yamada K."/>
            <person name="Lim J."/>
            <person name="Dale J.M."/>
            <person name="Chen H."/>
            <person name="Shinn P."/>
            <person name="Palm C.J."/>
            <person name="Southwick A.M."/>
            <person name="Wu H.C."/>
            <person name="Kim C.J."/>
            <person name="Nguyen M."/>
            <person name="Pham P.K."/>
            <person name="Cheuk R.F."/>
            <person name="Karlin-Newmann G."/>
            <person name="Liu S.X."/>
            <person name="Lam B."/>
            <person name="Sakano H."/>
            <person name="Wu T."/>
            <person name="Yu G."/>
            <person name="Miranda M."/>
            <person name="Quach H.L."/>
            <person name="Tripp M."/>
            <person name="Chang C.H."/>
            <person name="Lee J.M."/>
            <person name="Toriumi M.J."/>
            <person name="Chan M.M."/>
            <person name="Tang C.C."/>
            <person name="Onodera C.S."/>
            <person name="Deng J.M."/>
            <person name="Akiyama K."/>
            <person name="Ansari Y."/>
            <person name="Arakawa T."/>
            <person name="Banh J."/>
            <person name="Banno F."/>
            <person name="Bowser L."/>
            <person name="Brooks S.Y."/>
            <person name="Carninci P."/>
            <person name="Chao Q."/>
            <person name="Choy N."/>
            <person name="Enju A."/>
            <person name="Goldsmith A.D."/>
            <person name="Gurjal M."/>
            <person name="Hansen N.F."/>
            <person name="Hayashizaki Y."/>
            <person name="Johnson-Hopson C."/>
            <person name="Hsuan V.W."/>
            <person name="Iida K."/>
            <person name="Karnes M."/>
            <person name="Khan S."/>
            <person name="Koesema E."/>
            <person name="Ishida J."/>
            <person name="Jiang P.X."/>
            <person name="Jones T."/>
            <person name="Kawai J."/>
            <person name="Kamiya A."/>
            <person name="Meyers C."/>
            <person name="Nakajima M."/>
            <person name="Narusaka M."/>
            <person name="Seki M."/>
            <person name="Sakurai T."/>
            <person name="Satou M."/>
            <person name="Tamse R."/>
            <person name="Vaysberg M."/>
            <person name="Wallender E.K."/>
            <person name="Wong C."/>
            <person name="Yamamura Y."/>
            <person name="Yuan S."/>
            <person name="Shinozaki K."/>
            <person name="Davis R.W."/>
            <person name="Theologis A."/>
            <person name="Ecker J.R."/>
        </authorList>
    </citation>
    <scope>NUCLEOTIDE SEQUENCE [LARGE SCALE MRNA]</scope>
    <source>
        <strain>cv. Columbia</strain>
    </source>
</reference>
<reference key="5">
    <citation type="submission" date="2002-03" db="EMBL/GenBank/DDBJ databases">
        <title>Full-length cDNA from Arabidopsis thaliana.</title>
        <authorList>
            <person name="Brover V.V."/>
            <person name="Troukhan M.E."/>
            <person name="Alexandrov N.A."/>
            <person name="Lu Y.-P."/>
            <person name="Flavell R.B."/>
            <person name="Feldmann K.A."/>
        </authorList>
    </citation>
    <scope>NUCLEOTIDE SEQUENCE [LARGE SCALE MRNA]</scope>
</reference>
<reference key="6">
    <citation type="online journal article" date="1997" name="Plant Gene Register">
        <title>A cDNA encoding a putative Cys3His zinc finger protein in Arabidopsis thaliana.</title>
        <authorList>
            <person name="Fett-Neto A.G."/>
            <person name="McClung C.R."/>
        </authorList>
        <locator>PGR97-031</locator>
    </citation>
    <scope>NUCLEOTIDE SEQUENCE [MRNA] OF 6-315</scope>
    <source>
        <strain>cv. Columbia</strain>
    </source>
</reference>
<reference key="7">
    <citation type="journal article" date="2008" name="BMC Genomics">
        <title>Genome-wide analysis of CCCH zinc finger family in Arabidopsis and rice.</title>
        <authorList>
            <person name="Wang D."/>
            <person name="Guo Y."/>
            <person name="Wu C."/>
            <person name="Yang G."/>
            <person name="Li Y."/>
            <person name="Zheng C."/>
        </authorList>
    </citation>
    <scope>NOMENCLATURE</scope>
</reference>
<name>C3H23_ARATH</name>
<protein>
    <recommendedName>
        <fullName>Zinc finger CCCH domain-containing protein 23</fullName>
        <shortName>AtC3H23</shortName>
    </recommendedName>
    <alternativeName>
        <fullName>Protein ATCTH</fullName>
    </alternativeName>
</protein>